<proteinExistence type="inferred from homology"/>
<protein>
    <recommendedName>
        <fullName evidence="1">Biotin synthase</fullName>
        <ecNumber evidence="1">2.8.1.6</ecNumber>
    </recommendedName>
</protein>
<comment type="function">
    <text evidence="1">Catalyzes the conversion of dethiobiotin (DTB) to biotin by the insertion of a sulfur atom into dethiobiotin via a radical-based mechanism.</text>
</comment>
<comment type="catalytic activity">
    <reaction evidence="1">
        <text>(4R,5S)-dethiobiotin + (sulfur carrier)-SH + 2 reduced [2Fe-2S]-[ferredoxin] + 2 S-adenosyl-L-methionine = (sulfur carrier)-H + biotin + 2 5'-deoxyadenosine + 2 L-methionine + 2 oxidized [2Fe-2S]-[ferredoxin]</text>
        <dbReference type="Rhea" id="RHEA:22060"/>
        <dbReference type="Rhea" id="RHEA-COMP:10000"/>
        <dbReference type="Rhea" id="RHEA-COMP:10001"/>
        <dbReference type="Rhea" id="RHEA-COMP:14737"/>
        <dbReference type="Rhea" id="RHEA-COMP:14739"/>
        <dbReference type="ChEBI" id="CHEBI:17319"/>
        <dbReference type="ChEBI" id="CHEBI:29917"/>
        <dbReference type="ChEBI" id="CHEBI:33737"/>
        <dbReference type="ChEBI" id="CHEBI:33738"/>
        <dbReference type="ChEBI" id="CHEBI:57586"/>
        <dbReference type="ChEBI" id="CHEBI:57844"/>
        <dbReference type="ChEBI" id="CHEBI:59789"/>
        <dbReference type="ChEBI" id="CHEBI:64428"/>
        <dbReference type="ChEBI" id="CHEBI:149473"/>
        <dbReference type="EC" id="2.8.1.6"/>
    </reaction>
</comment>
<comment type="cofactor">
    <cofactor evidence="1">
        <name>[4Fe-4S] cluster</name>
        <dbReference type="ChEBI" id="CHEBI:49883"/>
    </cofactor>
    <text evidence="1">Binds 1 [4Fe-4S] cluster. The cluster is coordinated with 3 cysteines and an exchangeable S-adenosyl-L-methionine.</text>
</comment>
<comment type="cofactor">
    <cofactor evidence="1">
        <name>[2Fe-2S] cluster</name>
        <dbReference type="ChEBI" id="CHEBI:190135"/>
    </cofactor>
    <text evidence="1">Binds 1 [2Fe-2S] cluster. The cluster is coordinated with 3 cysteines and 1 arginine.</text>
</comment>
<comment type="pathway">
    <text evidence="1">Cofactor biosynthesis; biotin biosynthesis; biotin from 7,8-diaminononanoate: step 2/2.</text>
</comment>
<comment type="subunit">
    <text evidence="1">Homodimer.</text>
</comment>
<comment type="similarity">
    <text evidence="1">Belongs to the radical SAM superfamily. Biotin synthase family.</text>
</comment>
<accession>Q0RD46</accession>
<gene>
    <name evidence="1" type="primary">bioB</name>
    <name type="ordered locus">FRAAL6003</name>
</gene>
<reference key="1">
    <citation type="journal article" date="2007" name="Genome Res.">
        <title>Genome characteristics of facultatively symbiotic Frankia sp. strains reflect host range and host plant biogeography.</title>
        <authorList>
            <person name="Normand P."/>
            <person name="Lapierre P."/>
            <person name="Tisa L.S."/>
            <person name="Gogarten J.P."/>
            <person name="Alloisio N."/>
            <person name="Bagnarol E."/>
            <person name="Bassi C.A."/>
            <person name="Berry A.M."/>
            <person name="Bickhart D.M."/>
            <person name="Choisne N."/>
            <person name="Couloux A."/>
            <person name="Cournoyer B."/>
            <person name="Cruveiller S."/>
            <person name="Daubin V."/>
            <person name="Demange N."/>
            <person name="Francino M.P."/>
            <person name="Goltsman E."/>
            <person name="Huang Y."/>
            <person name="Kopp O.R."/>
            <person name="Labarre L."/>
            <person name="Lapidus A."/>
            <person name="Lavire C."/>
            <person name="Marechal J."/>
            <person name="Martinez M."/>
            <person name="Mastronunzio J.E."/>
            <person name="Mullin B.C."/>
            <person name="Niemann J."/>
            <person name="Pujic P."/>
            <person name="Rawnsley T."/>
            <person name="Rouy Z."/>
            <person name="Schenowitz C."/>
            <person name="Sellstedt A."/>
            <person name="Tavares F."/>
            <person name="Tomkins J.P."/>
            <person name="Vallenet D."/>
            <person name="Valverde C."/>
            <person name="Wall L.G."/>
            <person name="Wang Y."/>
            <person name="Medigue C."/>
            <person name="Benson D.R."/>
        </authorList>
    </citation>
    <scope>NUCLEOTIDE SEQUENCE [LARGE SCALE GENOMIC DNA]</scope>
    <source>
        <strain>DSM 45986 / CECT 9034 / ACN14a</strain>
    </source>
</reference>
<sequence length="351" mass="37470">MTAHIAPATVPPSAPAAAGQDPAALLAHARREVLEAGRGLDEAGVLAVLRLPDEYLGDALALAHEVRMRWCGPEVEVEGIISLKTGGCPEDCHFCSQSGKFDSPVRSAWLDVPSLVEAARQTAATGATEFCIVAAVRGPDARLMSQVREGVAAIRAAVDINVACSLGMLTQDQVDELTAIGVHRYNHNLETSRSHFPKVVTTHSWEERWETCEMVRAAGMELCCGAILGVGESLEQRAELAAQLAVLEPDEVPLNFLNPRPGTPFGDYPPVQPRDALRAIAAFRLALPRTILRYSGGREITLGDLEAQGMLGGINAVIVGNYLTTLGRPAESDLKMLADLSMPIKSLQATL</sequence>
<keyword id="KW-0001">2Fe-2S</keyword>
<keyword id="KW-0004">4Fe-4S</keyword>
<keyword id="KW-0093">Biotin biosynthesis</keyword>
<keyword id="KW-0408">Iron</keyword>
<keyword id="KW-0411">Iron-sulfur</keyword>
<keyword id="KW-0479">Metal-binding</keyword>
<keyword id="KW-1185">Reference proteome</keyword>
<keyword id="KW-0949">S-adenosyl-L-methionine</keyword>
<keyword id="KW-0808">Transferase</keyword>
<dbReference type="EC" id="2.8.1.6" evidence="1"/>
<dbReference type="EMBL" id="CT573213">
    <property type="protein sequence ID" value="CAJ64628.1"/>
    <property type="molecule type" value="Genomic_DNA"/>
</dbReference>
<dbReference type="SMR" id="Q0RD46"/>
<dbReference type="STRING" id="326424.FRAAL6003"/>
<dbReference type="KEGG" id="fal:FRAAL6003"/>
<dbReference type="eggNOG" id="COG0502">
    <property type="taxonomic scope" value="Bacteria"/>
</dbReference>
<dbReference type="HOGENOM" id="CLU_033172_2_1_11"/>
<dbReference type="OrthoDB" id="9786826at2"/>
<dbReference type="UniPathway" id="UPA00078">
    <property type="reaction ID" value="UER00162"/>
</dbReference>
<dbReference type="Proteomes" id="UP000000657">
    <property type="component" value="Chromosome"/>
</dbReference>
<dbReference type="GO" id="GO:0051537">
    <property type="term" value="F:2 iron, 2 sulfur cluster binding"/>
    <property type="evidence" value="ECO:0007669"/>
    <property type="project" value="UniProtKB-KW"/>
</dbReference>
<dbReference type="GO" id="GO:0051539">
    <property type="term" value="F:4 iron, 4 sulfur cluster binding"/>
    <property type="evidence" value="ECO:0007669"/>
    <property type="project" value="UniProtKB-KW"/>
</dbReference>
<dbReference type="GO" id="GO:0004076">
    <property type="term" value="F:biotin synthase activity"/>
    <property type="evidence" value="ECO:0007669"/>
    <property type="project" value="UniProtKB-UniRule"/>
</dbReference>
<dbReference type="GO" id="GO:0005506">
    <property type="term" value="F:iron ion binding"/>
    <property type="evidence" value="ECO:0007669"/>
    <property type="project" value="UniProtKB-UniRule"/>
</dbReference>
<dbReference type="GO" id="GO:0009102">
    <property type="term" value="P:biotin biosynthetic process"/>
    <property type="evidence" value="ECO:0007669"/>
    <property type="project" value="UniProtKB-UniRule"/>
</dbReference>
<dbReference type="CDD" id="cd01335">
    <property type="entry name" value="Radical_SAM"/>
    <property type="match status" value="1"/>
</dbReference>
<dbReference type="FunFam" id="3.20.20.70:FF:000026">
    <property type="entry name" value="Biotin synthase"/>
    <property type="match status" value="1"/>
</dbReference>
<dbReference type="Gene3D" id="3.20.20.70">
    <property type="entry name" value="Aldolase class I"/>
    <property type="match status" value="1"/>
</dbReference>
<dbReference type="HAMAP" id="MF_01694">
    <property type="entry name" value="BioB"/>
    <property type="match status" value="1"/>
</dbReference>
<dbReference type="InterPro" id="IPR013785">
    <property type="entry name" value="Aldolase_TIM"/>
</dbReference>
<dbReference type="InterPro" id="IPR010722">
    <property type="entry name" value="BATS_dom"/>
</dbReference>
<dbReference type="InterPro" id="IPR002684">
    <property type="entry name" value="Biotin_synth/BioAB"/>
</dbReference>
<dbReference type="InterPro" id="IPR024177">
    <property type="entry name" value="Biotin_synthase"/>
</dbReference>
<dbReference type="InterPro" id="IPR006638">
    <property type="entry name" value="Elp3/MiaA/NifB-like_rSAM"/>
</dbReference>
<dbReference type="InterPro" id="IPR007197">
    <property type="entry name" value="rSAM"/>
</dbReference>
<dbReference type="NCBIfam" id="TIGR00433">
    <property type="entry name" value="bioB"/>
    <property type="match status" value="1"/>
</dbReference>
<dbReference type="PANTHER" id="PTHR22976">
    <property type="entry name" value="BIOTIN SYNTHASE"/>
    <property type="match status" value="1"/>
</dbReference>
<dbReference type="PANTHER" id="PTHR22976:SF2">
    <property type="entry name" value="BIOTIN SYNTHASE, MITOCHONDRIAL"/>
    <property type="match status" value="1"/>
</dbReference>
<dbReference type="Pfam" id="PF06968">
    <property type="entry name" value="BATS"/>
    <property type="match status" value="1"/>
</dbReference>
<dbReference type="Pfam" id="PF04055">
    <property type="entry name" value="Radical_SAM"/>
    <property type="match status" value="1"/>
</dbReference>
<dbReference type="PIRSF" id="PIRSF001619">
    <property type="entry name" value="Biotin_synth"/>
    <property type="match status" value="1"/>
</dbReference>
<dbReference type="SFLD" id="SFLDG01278">
    <property type="entry name" value="biotin_synthase_like"/>
    <property type="match status" value="1"/>
</dbReference>
<dbReference type="SFLD" id="SFLDS00029">
    <property type="entry name" value="Radical_SAM"/>
    <property type="match status" value="1"/>
</dbReference>
<dbReference type="SMART" id="SM00876">
    <property type="entry name" value="BATS"/>
    <property type="match status" value="1"/>
</dbReference>
<dbReference type="SMART" id="SM00729">
    <property type="entry name" value="Elp3"/>
    <property type="match status" value="1"/>
</dbReference>
<dbReference type="SUPFAM" id="SSF102114">
    <property type="entry name" value="Radical SAM enzymes"/>
    <property type="match status" value="1"/>
</dbReference>
<dbReference type="PROSITE" id="PS51918">
    <property type="entry name" value="RADICAL_SAM"/>
    <property type="match status" value="1"/>
</dbReference>
<name>BIOB_FRAAA</name>
<organism>
    <name type="scientific">Frankia alni (strain DSM 45986 / CECT 9034 / ACN14a)</name>
    <dbReference type="NCBI Taxonomy" id="326424"/>
    <lineage>
        <taxon>Bacteria</taxon>
        <taxon>Bacillati</taxon>
        <taxon>Actinomycetota</taxon>
        <taxon>Actinomycetes</taxon>
        <taxon>Frankiales</taxon>
        <taxon>Frankiaceae</taxon>
        <taxon>Frankia</taxon>
    </lineage>
</organism>
<evidence type="ECO:0000255" key="1">
    <source>
        <dbReference type="HAMAP-Rule" id="MF_01694"/>
    </source>
</evidence>
<evidence type="ECO:0000255" key="2">
    <source>
        <dbReference type="PROSITE-ProRule" id="PRU01266"/>
    </source>
</evidence>
<feature type="chain" id="PRO_0000381386" description="Biotin synthase">
    <location>
        <begin position="1"/>
        <end position="351"/>
    </location>
</feature>
<feature type="domain" description="Radical SAM core" evidence="2">
    <location>
        <begin position="73"/>
        <end position="298"/>
    </location>
</feature>
<feature type="binding site" evidence="1">
    <location>
        <position position="88"/>
    </location>
    <ligand>
        <name>[4Fe-4S] cluster</name>
        <dbReference type="ChEBI" id="CHEBI:49883"/>
        <note>4Fe-4S-S-AdoMet</note>
    </ligand>
</feature>
<feature type="binding site" evidence="1">
    <location>
        <position position="92"/>
    </location>
    <ligand>
        <name>[4Fe-4S] cluster</name>
        <dbReference type="ChEBI" id="CHEBI:49883"/>
        <note>4Fe-4S-S-AdoMet</note>
    </ligand>
</feature>
<feature type="binding site" evidence="1">
    <location>
        <position position="95"/>
    </location>
    <ligand>
        <name>[4Fe-4S] cluster</name>
        <dbReference type="ChEBI" id="CHEBI:49883"/>
        <note>4Fe-4S-S-AdoMet</note>
    </ligand>
</feature>
<feature type="binding site" evidence="1">
    <location>
        <position position="131"/>
    </location>
    <ligand>
        <name>[2Fe-2S] cluster</name>
        <dbReference type="ChEBI" id="CHEBI:190135"/>
    </ligand>
</feature>
<feature type="binding site" evidence="1">
    <location>
        <position position="164"/>
    </location>
    <ligand>
        <name>[2Fe-2S] cluster</name>
        <dbReference type="ChEBI" id="CHEBI:190135"/>
    </ligand>
</feature>
<feature type="binding site" evidence="1">
    <location>
        <position position="223"/>
    </location>
    <ligand>
        <name>[2Fe-2S] cluster</name>
        <dbReference type="ChEBI" id="CHEBI:190135"/>
    </ligand>
</feature>
<feature type="binding site" evidence="1">
    <location>
        <position position="293"/>
    </location>
    <ligand>
        <name>[2Fe-2S] cluster</name>
        <dbReference type="ChEBI" id="CHEBI:190135"/>
    </ligand>
</feature>